<protein>
    <recommendedName>
        <fullName evidence="1">Putative manganese efflux pump MntP</fullName>
    </recommendedName>
</protein>
<accession>Q2NTC7</accession>
<name>MNTP_SODGM</name>
<comment type="function">
    <text evidence="1">Probably functions as a manganese efflux pump.</text>
</comment>
<comment type="subcellular location">
    <subcellularLocation>
        <location evidence="1">Cell inner membrane</location>
        <topology evidence="1">Multi-pass membrane protein</topology>
    </subcellularLocation>
</comment>
<comment type="similarity">
    <text evidence="1">Belongs to the MntP (TC 9.B.29) family.</text>
</comment>
<sequence length="195" mass="20322">MNLSATLILAFGMSMDAFAASVGKGATLHKPALREALRTGLIFGVIEAITPLIGWGLGLLSSQYIMRWDHWVAFTLLAFLGGRMVLAGWKQQPLETSLVGKHSLGVLIATAIATSLDALAIGVGLAMLQVNILHAALLIGLATLIMSTIGMLLGRFVGPCLGSKAEIIGGLILIGIGCNILYSHIGEAMLAHLPG</sequence>
<feature type="chain" id="PRO_0000296938" description="Putative manganese efflux pump MntP">
    <location>
        <begin position="1"/>
        <end position="195"/>
    </location>
</feature>
<feature type="transmembrane region" description="Helical" evidence="1">
    <location>
        <begin position="3"/>
        <end position="23"/>
    </location>
</feature>
<feature type="transmembrane region" description="Helical" evidence="1">
    <location>
        <begin position="40"/>
        <end position="60"/>
    </location>
</feature>
<feature type="transmembrane region" description="Helical" evidence="1">
    <location>
        <begin position="68"/>
        <end position="88"/>
    </location>
</feature>
<feature type="transmembrane region" description="Helical" evidence="1">
    <location>
        <begin position="106"/>
        <end position="126"/>
    </location>
</feature>
<feature type="transmembrane region" description="Helical" evidence="1">
    <location>
        <begin position="132"/>
        <end position="152"/>
    </location>
</feature>
<feature type="transmembrane region" description="Helical" evidence="1">
    <location>
        <begin position="165"/>
        <end position="185"/>
    </location>
</feature>
<keyword id="KW-0997">Cell inner membrane</keyword>
<keyword id="KW-1003">Cell membrane</keyword>
<keyword id="KW-0406">Ion transport</keyword>
<keyword id="KW-0464">Manganese</keyword>
<keyword id="KW-0472">Membrane</keyword>
<keyword id="KW-0812">Transmembrane</keyword>
<keyword id="KW-1133">Transmembrane helix</keyword>
<keyword id="KW-0813">Transport</keyword>
<evidence type="ECO:0000255" key="1">
    <source>
        <dbReference type="HAMAP-Rule" id="MF_01521"/>
    </source>
</evidence>
<organism>
    <name type="scientific">Sodalis glossinidius (strain morsitans)</name>
    <dbReference type="NCBI Taxonomy" id="343509"/>
    <lineage>
        <taxon>Bacteria</taxon>
        <taxon>Pseudomonadati</taxon>
        <taxon>Pseudomonadota</taxon>
        <taxon>Gammaproteobacteria</taxon>
        <taxon>Enterobacterales</taxon>
        <taxon>Bruguierivoracaceae</taxon>
        <taxon>Sodalis</taxon>
    </lineage>
</organism>
<dbReference type="EMBL" id="AP008232">
    <property type="protein sequence ID" value="BAE74598.1"/>
    <property type="molecule type" value="Genomic_DNA"/>
</dbReference>
<dbReference type="RefSeq" id="WP_011411151.1">
    <property type="nucleotide sequence ID" value="NC_007712.1"/>
</dbReference>
<dbReference type="KEGG" id="sgl:SG1323"/>
<dbReference type="eggNOG" id="COG1971">
    <property type="taxonomic scope" value="Bacteria"/>
</dbReference>
<dbReference type="HOGENOM" id="CLU_096410_0_0_6"/>
<dbReference type="OrthoDB" id="9811590at2"/>
<dbReference type="Proteomes" id="UP000001932">
    <property type="component" value="Chromosome"/>
</dbReference>
<dbReference type="GO" id="GO:0005886">
    <property type="term" value="C:plasma membrane"/>
    <property type="evidence" value="ECO:0007669"/>
    <property type="project" value="UniProtKB-SubCell"/>
</dbReference>
<dbReference type="GO" id="GO:0005384">
    <property type="term" value="F:manganese ion transmembrane transporter activity"/>
    <property type="evidence" value="ECO:0007669"/>
    <property type="project" value="UniProtKB-UniRule"/>
</dbReference>
<dbReference type="HAMAP" id="MF_01521">
    <property type="entry name" value="MntP_pump"/>
    <property type="match status" value="1"/>
</dbReference>
<dbReference type="InterPro" id="IPR003810">
    <property type="entry name" value="Mntp/YtaF"/>
</dbReference>
<dbReference type="InterPro" id="IPR022929">
    <property type="entry name" value="Put_MntP"/>
</dbReference>
<dbReference type="NCBIfam" id="NF008546">
    <property type="entry name" value="PRK11469.1"/>
    <property type="match status" value="1"/>
</dbReference>
<dbReference type="PANTHER" id="PTHR35529">
    <property type="entry name" value="MANGANESE EFFLUX PUMP MNTP-RELATED"/>
    <property type="match status" value="1"/>
</dbReference>
<dbReference type="PANTHER" id="PTHR35529:SF1">
    <property type="entry name" value="MANGANESE EFFLUX PUMP MNTP-RELATED"/>
    <property type="match status" value="1"/>
</dbReference>
<dbReference type="Pfam" id="PF02659">
    <property type="entry name" value="Mntp"/>
    <property type="match status" value="1"/>
</dbReference>
<gene>
    <name evidence="1" type="primary">mntP</name>
    <name type="ordered locus">SG1323</name>
</gene>
<reference key="1">
    <citation type="journal article" date="2006" name="Genome Res.">
        <title>Massive genome erosion and functional adaptations provide insights into the symbiotic lifestyle of Sodalis glossinidius in the tsetse host.</title>
        <authorList>
            <person name="Toh H."/>
            <person name="Weiss B.L."/>
            <person name="Perkin S.A.H."/>
            <person name="Yamashita A."/>
            <person name="Oshima K."/>
            <person name="Hattori M."/>
            <person name="Aksoy S."/>
        </authorList>
    </citation>
    <scope>NUCLEOTIDE SEQUENCE [LARGE SCALE GENOMIC DNA]</scope>
    <source>
        <strain>morsitans</strain>
    </source>
</reference>
<proteinExistence type="inferred from homology"/>